<dbReference type="EC" id="2.7.1.148"/>
<dbReference type="EMBL" id="BX251410">
    <property type="protein sequence ID" value="CAD66839.1"/>
    <property type="molecule type" value="Genomic_DNA"/>
</dbReference>
<dbReference type="SMR" id="Q83IA0"/>
<dbReference type="KEGG" id="tws:TW159"/>
<dbReference type="HOGENOM" id="CLU_585165_0_0_11"/>
<dbReference type="UniPathway" id="UPA00056">
    <property type="reaction ID" value="UER00094"/>
</dbReference>
<dbReference type="GO" id="GO:0050515">
    <property type="term" value="F:4-(cytidine 5'-diphospho)-2-C-methyl-D-erythritol kinase activity"/>
    <property type="evidence" value="ECO:0007669"/>
    <property type="project" value="UniProtKB-UniRule"/>
</dbReference>
<dbReference type="GO" id="GO:0005524">
    <property type="term" value="F:ATP binding"/>
    <property type="evidence" value="ECO:0007669"/>
    <property type="project" value="UniProtKB-UniRule"/>
</dbReference>
<dbReference type="GO" id="GO:0019288">
    <property type="term" value="P:isopentenyl diphosphate biosynthetic process, methylerythritol 4-phosphate pathway"/>
    <property type="evidence" value="ECO:0007669"/>
    <property type="project" value="UniProtKB-UniRule"/>
</dbReference>
<dbReference type="GO" id="GO:0016114">
    <property type="term" value="P:terpenoid biosynthetic process"/>
    <property type="evidence" value="ECO:0007669"/>
    <property type="project" value="InterPro"/>
</dbReference>
<dbReference type="Gene3D" id="3.30.230.10">
    <property type="match status" value="1"/>
</dbReference>
<dbReference type="Gene3D" id="3.30.70.890">
    <property type="entry name" value="GHMP kinase, C-terminal domain"/>
    <property type="match status" value="1"/>
</dbReference>
<dbReference type="HAMAP" id="MF_00061">
    <property type="entry name" value="IspE"/>
    <property type="match status" value="1"/>
</dbReference>
<dbReference type="InterPro" id="IPR013750">
    <property type="entry name" value="GHMP_kinase_C_dom"/>
</dbReference>
<dbReference type="InterPro" id="IPR036554">
    <property type="entry name" value="GHMP_kinase_C_sf"/>
</dbReference>
<dbReference type="InterPro" id="IPR006204">
    <property type="entry name" value="GHMP_kinase_N_dom"/>
</dbReference>
<dbReference type="InterPro" id="IPR004424">
    <property type="entry name" value="IspE"/>
</dbReference>
<dbReference type="InterPro" id="IPR020568">
    <property type="entry name" value="Ribosomal_Su5_D2-typ_SF"/>
</dbReference>
<dbReference type="InterPro" id="IPR014721">
    <property type="entry name" value="Ribsml_uS5_D2-typ_fold_subgr"/>
</dbReference>
<dbReference type="PANTHER" id="PTHR43527">
    <property type="entry name" value="4-DIPHOSPHOCYTIDYL-2-C-METHYL-D-ERYTHRITOL KINASE, CHLOROPLASTIC"/>
    <property type="match status" value="1"/>
</dbReference>
<dbReference type="PANTHER" id="PTHR43527:SF2">
    <property type="entry name" value="4-DIPHOSPHOCYTIDYL-2-C-METHYL-D-ERYTHRITOL KINASE, CHLOROPLASTIC"/>
    <property type="match status" value="1"/>
</dbReference>
<dbReference type="Pfam" id="PF08544">
    <property type="entry name" value="GHMP_kinases_C"/>
    <property type="match status" value="1"/>
</dbReference>
<dbReference type="Pfam" id="PF00288">
    <property type="entry name" value="GHMP_kinases_N"/>
    <property type="match status" value="1"/>
</dbReference>
<dbReference type="SUPFAM" id="SSF55060">
    <property type="entry name" value="GHMP Kinase, C-terminal domain"/>
    <property type="match status" value="1"/>
</dbReference>
<dbReference type="SUPFAM" id="SSF54211">
    <property type="entry name" value="Ribosomal protein S5 domain 2-like"/>
    <property type="match status" value="1"/>
</dbReference>
<accession>Q83IA0</accession>
<gene>
    <name type="primary">ispE</name>
    <name type="ordered locus">TW159</name>
</gene>
<protein>
    <recommendedName>
        <fullName>4-diphosphocytidyl-2-C-methyl-D-erythritol kinase</fullName>
        <shortName>CMK</shortName>
        <ecNumber>2.7.1.148</ecNumber>
    </recommendedName>
    <alternativeName>
        <fullName>4-(cytidine-5'-diphospho)-2-C-methyl-D-erythritol kinase</fullName>
    </alternativeName>
</protein>
<proteinExistence type="inferred from homology"/>
<name>ISPE_TROW8</name>
<keyword id="KW-0067">ATP-binding</keyword>
<keyword id="KW-0414">Isoprene biosynthesis</keyword>
<keyword id="KW-0418">Kinase</keyword>
<keyword id="KW-0547">Nucleotide-binding</keyword>
<keyword id="KW-0808">Transferase</keyword>
<sequence>MKTDGGNTWRASHSKPLNTANTMGEPFSHSEYSVHADQSEFYLNELTEHSGQDNPCMNTSRLNTNRYGHPVVHPCPKIHCICTQSNIAAIGSDCTGCVDIAQACKMLRGGQGCTQDPCVKNPHTQCFTDVSNHAMRNVLPLNVSNTEQFPIQIEYANGRNPVLNPMDDLAMRAALLLSKDIDLQNTHILPSTRISIEKNIPVAAGLAGGSADAAAVLLGINSAWQTNYSRCDLLGKAGALGADVPFLIWGGAAYGSGTGSCVTFFETQTLYWVLCFSKHPLSTRKVFQELDRQRSGAGCNHHPVFSNPAECAEMLKKAIKRGPEALAALLHNDLTSAAKMLMPEIAERIKAAERCPGILRAIISGSGPTLALLAEDAEAANRACSILKDTGVICKAVSSPAYSSIYWQT</sequence>
<reference key="1">
    <citation type="journal article" date="2003" name="Lancet">
        <title>Sequencing and analysis of the genome of the Whipple's disease bacterium Tropheryma whipplei.</title>
        <authorList>
            <person name="Bentley S.D."/>
            <person name="Maiwald M."/>
            <person name="Murphy L.D."/>
            <person name="Pallen M.J."/>
            <person name="Yeats C.A."/>
            <person name="Dover L.G."/>
            <person name="Norbertczak H.T."/>
            <person name="Besra G.S."/>
            <person name="Quail M.A."/>
            <person name="Harris D.E."/>
            <person name="von Herbay A."/>
            <person name="Goble A."/>
            <person name="Rutter S."/>
            <person name="Squares R."/>
            <person name="Squares S."/>
            <person name="Barrell B.G."/>
            <person name="Parkhill J."/>
            <person name="Relman D.A."/>
        </authorList>
    </citation>
    <scope>NUCLEOTIDE SEQUENCE [LARGE SCALE GENOMIC DNA]</scope>
    <source>
        <strain>TW08/27</strain>
    </source>
</reference>
<feature type="chain" id="PRO_0000189283" description="4-diphosphocytidyl-2-C-methyl-D-erythritol kinase">
    <location>
        <begin position="1"/>
        <end position="409"/>
    </location>
</feature>
<feature type="region of interest" description="Disordered" evidence="3">
    <location>
        <begin position="1"/>
        <end position="26"/>
    </location>
</feature>
<feature type="compositionally biased region" description="Polar residues" evidence="3">
    <location>
        <begin position="1"/>
        <end position="22"/>
    </location>
</feature>
<feature type="active site" evidence="1">
    <location>
        <position position="243"/>
    </location>
</feature>
<feature type="binding site" evidence="2">
    <location>
        <begin position="201"/>
        <end position="211"/>
    </location>
    <ligand>
        <name>ATP</name>
        <dbReference type="ChEBI" id="CHEBI:30616"/>
    </ligand>
</feature>
<comment type="function">
    <text evidence="1">Catalyzes the phosphorylation of the position 2 hydroxy group of 4-diphosphocytidyl-2C-methyl-D-erythritol.</text>
</comment>
<comment type="catalytic activity">
    <reaction>
        <text>4-CDP-2-C-methyl-D-erythritol + ATP = 4-CDP-2-C-methyl-D-erythritol 2-phosphate + ADP + H(+)</text>
        <dbReference type="Rhea" id="RHEA:18437"/>
        <dbReference type="ChEBI" id="CHEBI:15378"/>
        <dbReference type="ChEBI" id="CHEBI:30616"/>
        <dbReference type="ChEBI" id="CHEBI:57823"/>
        <dbReference type="ChEBI" id="CHEBI:57919"/>
        <dbReference type="ChEBI" id="CHEBI:456216"/>
        <dbReference type="EC" id="2.7.1.148"/>
    </reaction>
</comment>
<comment type="pathway">
    <text>Isoprenoid biosynthesis; isopentenyl diphosphate biosynthesis via DXP pathway; isopentenyl diphosphate from 1-deoxy-D-xylulose 5-phosphate: step 3/6.</text>
</comment>
<comment type="similarity">
    <text evidence="4">Belongs to the GHMP kinase family. IspE subfamily.</text>
</comment>
<comment type="caution">
    <text evidence="4">Cys-97 is present instead of the conserved Lys which is expected to be an active site residue.</text>
</comment>
<organism>
    <name type="scientific">Tropheryma whipplei (strain TW08/27)</name>
    <name type="common">Whipple's bacillus</name>
    <dbReference type="NCBI Taxonomy" id="218496"/>
    <lineage>
        <taxon>Bacteria</taxon>
        <taxon>Bacillati</taxon>
        <taxon>Actinomycetota</taxon>
        <taxon>Actinomycetes</taxon>
        <taxon>Micrococcales</taxon>
        <taxon>Tropherymataceae</taxon>
        <taxon>Tropheryma</taxon>
    </lineage>
</organism>
<evidence type="ECO:0000250" key="1"/>
<evidence type="ECO:0000255" key="2"/>
<evidence type="ECO:0000256" key="3">
    <source>
        <dbReference type="SAM" id="MobiDB-lite"/>
    </source>
</evidence>
<evidence type="ECO:0000305" key="4"/>